<name>CHRR_PSEPU</name>
<reference key="1">
    <citation type="submission" date="2001-05" db="EMBL/GenBank/DDBJ databases">
        <title>Cloning and characterization of bacterial soluble chromate reductase genes and proteins.</title>
        <authorList>
            <person name="Park C.-H."/>
            <person name="Gonzalez C."/>
            <person name="Keyhan M."/>
            <person name="Matin A."/>
        </authorList>
    </citation>
    <scope>NUCLEOTIDE SEQUENCE [GENOMIC DNA]</scope>
    <source>
        <strain>MK1</strain>
    </source>
</reference>
<reference key="2">
    <citation type="journal article" date="2000" name="Appl. Environ. Microbiol.">
        <title>Purification to homogeneity and characterization of a novel Pseudomonas putida chromate reductase.</title>
        <authorList>
            <person name="Park C.H."/>
            <person name="Keyhan M."/>
            <person name="Wielinga B."/>
            <person name="Fendorf S."/>
            <person name="Matin A."/>
        </authorList>
    </citation>
    <scope>FUNCTION</scope>
    <scope>CATALYTIC ACTIVITY</scope>
    <scope>BIOPHYSICOCHEMICAL PROPERTIES</scope>
    <scope>SUBSTRATE SPECIFICITY</scope>
    <scope>ACTIVITY REGULATION</scope>
    <source>
        <strain>MK1</strain>
    </source>
</reference>
<feature type="chain" id="PRO_0000430016" description="Quinone reductase">
    <location>
        <begin position="1"/>
        <end position="186"/>
    </location>
</feature>
<feature type="binding site" evidence="1">
    <location>
        <begin position="13"/>
        <end position="20"/>
    </location>
    <ligand>
        <name>FMN</name>
        <dbReference type="ChEBI" id="CHEBI:58210"/>
    </ligand>
</feature>
<feature type="binding site" evidence="1">
    <location>
        <begin position="80"/>
        <end position="83"/>
    </location>
    <ligand>
        <name>FMN</name>
        <dbReference type="ChEBI" id="CHEBI:58210"/>
    </ligand>
</feature>
<feature type="binding site" evidence="1">
    <location>
        <position position="116"/>
    </location>
    <ligand>
        <name>FMN</name>
        <dbReference type="ChEBI" id="CHEBI:58210"/>
    </ligand>
</feature>
<evidence type="ECO:0000250" key="1">
    <source>
        <dbReference type="UniProtKB" id="P0AGE6"/>
    </source>
</evidence>
<evidence type="ECO:0000250" key="2">
    <source>
        <dbReference type="UniProtKB" id="Q88FF8"/>
    </source>
</evidence>
<evidence type="ECO:0000269" key="3">
    <source>
    </source>
</evidence>
<evidence type="ECO:0000305" key="4"/>
<organism>
    <name type="scientific">Pseudomonas putida</name>
    <name type="common">Arthrobacter siderocapsulatus</name>
    <dbReference type="NCBI Taxonomy" id="303"/>
    <lineage>
        <taxon>Bacteria</taxon>
        <taxon>Pseudomonadati</taxon>
        <taxon>Pseudomonadota</taxon>
        <taxon>Gammaproteobacteria</taxon>
        <taxon>Pseudomonadales</taxon>
        <taxon>Pseudomonadaceae</taxon>
        <taxon>Pseudomonas</taxon>
    </lineage>
</organism>
<dbReference type="EC" id="1.6.5.2" evidence="2"/>
<dbReference type="EC" id="1.6.-.-" evidence="3"/>
<dbReference type="EMBL" id="AF375641">
    <property type="protein sequence ID" value="AAK56852.1"/>
    <property type="molecule type" value="Genomic_DNA"/>
</dbReference>
<dbReference type="SMR" id="Q93T20"/>
<dbReference type="eggNOG" id="COG0431">
    <property type="taxonomic scope" value="Bacteria"/>
</dbReference>
<dbReference type="SABIO-RK" id="Q93T20"/>
<dbReference type="GO" id="GO:0005829">
    <property type="term" value="C:cytosol"/>
    <property type="evidence" value="ECO:0007669"/>
    <property type="project" value="TreeGrafter"/>
</dbReference>
<dbReference type="GO" id="GO:0010181">
    <property type="term" value="F:FMN binding"/>
    <property type="evidence" value="ECO:0007669"/>
    <property type="project" value="TreeGrafter"/>
</dbReference>
<dbReference type="GO" id="GO:0050136">
    <property type="term" value="F:NADH:ubiquinone reductase (non-electrogenic) activity"/>
    <property type="evidence" value="ECO:0007669"/>
    <property type="project" value="RHEA"/>
</dbReference>
<dbReference type="GO" id="GO:0008753">
    <property type="term" value="F:NADPH dehydrogenase (quinone) activity"/>
    <property type="evidence" value="ECO:0007669"/>
    <property type="project" value="RHEA"/>
</dbReference>
<dbReference type="Gene3D" id="3.40.50.360">
    <property type="match status" value="1"/>
</dbReference>
<dbReference type="InterPro" id="IPR029039">
    <property type="entry name" value="Flavoprotein-like_sf"/>
</dbReference>
<dbReference type="InterPro" id="IPR005025">
    <property type="entry name" value="FMN_Rdtase-like_dom"/>
</dbReference>
<dbReference type="InterPro" id="IPR050712">
    <property type="entry name" value="NAD(P)H-dep_reductase"/>
</dbReference>
<dbReference type="PANTHER" id="PTHR30543">
    <property type="entry name" value="CHROMATE REDUCTASE"/>
    <property type="match status" value="1"/>
</dbReference>
<dbReference type="PANTHER" id="PTHR30543:SF21">
    <property type="entry name" value="NAD(P)H-DEPENDENT FMN REDUCTASE LOT6"/>
    <property type="match status" value="1"/>
</dbReference>
<dbReference type="Pfam" id="PF03358">
    <property type="entry name" value="FMN_red"/>
    <property type="match status" value="1"/>
</dbReference>
<dbReference type="SUPFAM" id="SSF52218">
    <property type="entry name" value="Flavoproteins"/>
    <property type="match status" value="1"/>
</dbReference>
<gene>
    <name type="primary">chrR</name>
</gene>
<protein>
    <recommendedName>
        <fullName evidence="2">Quinone reductase</fullName>
        <ecNumber evidence="2">1.6.5.2</ecNumber>
    </recommendedName>
    <alternativeName>
        <fullName evidence="4">Chromate reductase</fullName>
        <shortName>CHRR</shortName>
        <ecNumber evidence="3">1.6.-.-</ecNumber>
    </alternativeName>
    <alternativeName>
        <fullName evidence="2">NAD(P)H dehydrogenase (quinone)</fullName>
    </alternativeName>
</protein>
<proteinExistence type="evidence at protein level"/>
<sequence length="186" mass="20256">MSQVYSVAVVVGSLRKESYNRKVARALSELAPSSLALKIVEIGDLPLYNEDVEAEAPPEAWKRFREEIRRSDAVLFVTPEHNRSVPGCLKNAIDVGSRPYGQSAWSGKPTAVVSVSPGAIGGFGANHAVRQSLVFLDMPCMQMPEAYIGGAASLFDDSGKLNDKTRPFLQAFVDKFASWVKLNRAV</sequence>
<keyword id="KW-0285">Flavoprotein</keyword>
<keyword id="KW-0288">FMN</keyword>
<keyword id="KW-0520">NAD</keyword>
<keyword id="KW-0521">NADP</keyword>
<keyword id="KW-0560">Oxidoreductase</keyword>
<accession>Q93T20</accession>
<comment type="function">
    <text evidence="2 3">Catalyzes the reduction of quinones. Acts by simultaneous two-electron transfer, avoiding formation of highly reactive semiquinone intermediates and producing quinols that promote tolerance of H(2)O(2). Quinone reduction is probably the primary biological role of ChrR (By similarity). Can also reduce toxic chromate to insoluble and less toxic Cr(3+). Catalyzes the transfer of three electrons to Cr(6+) producing Cr(3+) and one electron to molecular oxygen. This reaction produces transiently a minimal amount of the toxic Cr(5+) species and reactive oxygen species (ROS). Chromate reduction protects the cell against chromate toxicity, but is likely a secondary activity (By similarity) (PubMed:10788340).</text>
</comment>
<comment type="catalytic activity">
    <reaction evidence="2">
        <text>a quinone + NADH + H(+) = a quinol + NAD(+)</text>
        <dbReference type="Rhea" id="RHEA:46160"/>
        <dbReference type="ChEBI" id="CHEBI:15378"/>
        <dbReference type="ChEBI" id="CHEBI:24646"/>
        <dbReference type="ChEBI" id="CHEBI:57540"/>
        <dbReference type="ChEBI" id="CHEBI:57945"/>
        <dbReference type="ChEBI" id="CHEBI:132124"/>
        <dbReference type="EC" id="1.6.5.2"/>
    </reaction>
</comment>
<comment type="catalytic activity">
    <reaction evidence="2">
        <text>a quinone + NADPH + H(+) = a quinol + NADP(+)</text>
        <dbReference type="Rhea" id="RHEA:46164"/>
        <dbReference type="ChEBI" id="CHEBI:15378"/>
        <dbReference type="ChEBI" id="CHEBI:24646"/>
        <dbReference type="ChEBI" id="CHEBI:57783"/>
        <dbReference type="ChEBI" id="CHEBI:58349"/>
        <dbReference type="ChEBI" id="CHEBI:132124"/>
        <dbReference type="EC" id="1.6.5.2"/>
    </reaction>
</comment>
<comment type="catalytic activity">
    <reaction evidence="3">
        <text>Cr(6+) + 2 NADH + O2 = Cr(3+) + superoxide + 2 NAD(+) + 2 H(+)</text>
        <dbReference type="Rhea" id="RHEA:44372"/>
        <dbReference type="ChEBI" id="CHEBI:15378"/>
        <dbReference type="ChEBI" id="CHEBI:15379"/>
        <dbReference type="ChEBI" id="CHEBI:18421"/>
        <dbReference type="ChEBI" id="CHEBI:33007"/>
        <dbReference type="ChEBI" id="CHEBI:49544"/>
        <dbReference type="ChEBI" id="CHEBI:57540"/>
        <dbReference type="ChEBI" id="CHEBI:57945"/>
    </reaction>
</comment>
<comment type="catalytic activity">
    <reaction evidence="3">
        <text>Cr(6+) + 2 NADPH + O2 = Cr(3+) + superoxide + 2 NADP(+) + 2 H(+)</text>
        <dbReference type="Rhea" id="RHEA:44368"/>
        <dbReference type="ChEBI" id="CHEBI:15378"/>
        <dbReference type="ChEBI" id="CHEBI:15379"/>
        <dbReference type="ChEBI" id="CHEBI:18421"/>
        <dbReference type="ChEBI" id="CHEBI:33007"/>
        <dbReference type="ChEBI" id="CHEBI:49544"/>
        <dbReference type="ChEBI" id="CHEBI:57783"/>
        <dbReference type="ChEBI" id="CHEBI:58349"/>
    </reaction>
</comment>
<comment type="cofactor">
    <cofactor evidence="2">
        <name>FMN</name>
        <dbReference type="ChEBI" id="CHEBI:58210"/>
    </cofactor>
    <text evidence="2">Binds 1 FMN per subunit.</text>
</comment>
<comment type="activity regulation">
    <text evidence="3">Non-competitively inhibited by sulfate.</text>
</comment>
<comment type="biophysicochemical properties">
    <kinetics>
        <KM evidence="3">374 uM for chromate (at pH 5 and 50 degrees Celsius)</KM>
        <Vmax evidence="3">1.72 umol/min/mg enzyme (at pH 5 and 50 degrees Celsius)</Vmax>
    </kinetics>
    <phDependence>
        <text evidence="3">Optimum pH is 5 for chromate reductase activity.</text>
    </phDependence>
    <temperatureDependence>
        <text evidence="3">Optimum temperature is 80 degrees Celsius for chromate reductase activity.</text>
    </temperatureDependence>
</comment>
<comment type="subunit">
    <text evidence="2">Homotetramer. Dimer of dimers. The tetrameric configuration has a central role in chromate reductase activity.</text>
</comment>
<comment type="similarity">
    <text evidence="4">Belongs to the SsuE family.</text>
</comment>